<proteinExistence type="inferred from homology"/>
<name>KHSE_RHOE4</name>
<comment type="function">
    <text evidence="1">Catalyzes the ATP-dependent phosphorylation of L-homoserine to L-homoserine phosphate.</text>
</comment>
<comment type="catalytic activity">
    <reaction evidence="1">
        <text>L-homoserine + ATP = O-phospho-L-homoserine + ADP + H(+)</text>
        <dbReference type="Rhea" id="RHEA:13985"/>
        <dbReference type="ChEBI" id="CHEBI:15378"/>
        <dbReference type="ChEBI" id="CHEBI:30616"/>
        <dbReference type="ChEBI" id="CHEBI:57476"/>
        <dbReference type="ChEBI" id="CHEBI:57590"/>
        <dbReference type="ChEBI" id="CHEBI:456216"/>
        <dbReference type="EC" id="2.7.1.39"/>
    </reaction>
</comment>
<comment type="pathway">
    <text evidence="1">Amino-acid biosynthesis; L-threonine biosynthesis; L-threonine from L-aspartate: step 4/5.</text>
</comment>
<comment type="subcellular location">
    <subcellularLocation>
        <location evidence="1">Cytoplasm</location>
    </subcellularLocation>
</comment>
<comment type="similarity">
    <text evidence="1">Belongs to the GHMP kinase family. Homoserine kinase subfamily.</text>
</comment>
<evidence type="ECO:0000255" key="1">
    <source>
        <dbReference type="HAMAP-Rule" id="MF_00384"/>
    </source>
</evidence>
<feature type="chain" id="PRO_1000205739" description="Homoserine kinase">
    <location>
        <begin position="1"/>
        <end position="314"/>
    </location>
</feature>
<feature type="binding site" evidence="1">
    <location>
        <begin position="95"/>
        <end position="105"/>
    </location>
    <ligand>
        <name>ATP</name>
        <dbReference type="ChEBI" id="CHEBI:30616"/>
    </ligand>
</feature>
<protein>
    <recommendedName>
        <fullName evidence="1">Homoserine kinase</fullName>
        <shortName evidence="1">HK</shortName>
        <shortName evidence="1">HSK</shortName>
        <ecNumber evidence="1">2.7.1.39</ecNumber>
    </recommendedName>
</protein>
<dbReference type="EC" id="2.7.1.39" evidence="1"/>
<dbReference type="EMBL" id="AP008957">
    <property type="protein sequence ID" value="BAH34628.1"/>
    <property type="molecule type" value="Genomic_DNA"/>
</dbReference>
<dbReference type="RefSeq" id="WP_007726194.1">
    <property type="nucleotide sequence ID" value="NC_012490.1"/>
</dbReference>
<dbReference type="SMR" id="C1A1Z3"/>
<dbReference type="GeneID" id="64141712"/>
<dbReference type="KEGG" id="rer:RER_39200"/>
<dbReference type="eggNOG" id="COG0083">
    <property type="taxonomic scope" value="Bacteria"/>
</dbReference>
<dbReference type="HOGENOM" id="CLU_041243_0_1_11"/>
<dbReference type="UniPathway" id="UPA00050">
    <property type="reaction ID" value="UER00064"/>
</dbReference>
<dbReference type="Proteomes" id="UP000002204">
    <property type="component" value="Chromosome"/>
</dbReference>
<dbReference type="GO" id="GO:0005737">
    <property type="term" value="C:cytoplasm"/>
    <property type="evidence" value="ECO:0007669"/>
    <property type="project" value="UniProtKB-SubCell"/>
</dbReference>
<dbReference type="GO" id="GO:0005524">
    <property type="term" value="F:ATP binding"/>
    <property type="evidence" value="ECO:0007669"/>
    <property type="project" value="UniProtKB-UniRule"/>
</dbReference>
<dbReference type="GO" id="GO:0004413">
    <property type="term" value="F:homoserine kinase activity"/>
    <property type="evidence" value="ECO:0007669"/>
    <property type="project" value="UniProtKB-UniRule"/>
</dbReference>
<dbReference type="GO" id="GO:0009088">
    <property type="term" value="P:threonine biosynthetic process"/>
    <property type="evidence" value="ECO:0007669"/>
    <property type="project" value="UniProtKB-UniRule"/>
</dbReference>
<dbReference type="Gene3D" id="3.30.230.10">
    <property type="match status" value="1"/>
</dbReference>
<dbReference type="Gene3D" id="3.30.70.890">
    <property type="entry name" value="GHMP kinase, C-terminal domain"/>
    <property type="match status" value="1"/>
</dbReference>
<dbReference type="HAMAP" id="MF_00384">
    <property type="entry name" value="Homoser_kinase"/>
    <property type="match status" value="1"/>
</dbReference>
<dbReference type="InterPro" id="IPR013750">
    <property type="entry name" value="GHMP_kinase_C_dom"/>
</dbReference>
<dbReference type="InterPro" id="IPR036554">
    <property type="entry name" value="GHMP_kinase_C_sf"/>
</dbReference>
<dbReference type="InterPro" id="IPR006204">
    <property type="entry name" value="GHMP_kinase_N_dom"/>
</dbReference>
<dbReference type="InterPro" id="IPR006203">
    <property type="entry name" value="GHMP_knse_ATP-bd_CS"/>
</dbReference>
<dbReference type="InterPro" id="IPR000870">
    <property type="entry name" value="Homoserine_kinase"/>
</dbReference>
<dbReference type="InterPro" id="IPR020568">
    <property type="entry name" value="Ribosomal_Su5_D2-typ_SF"/>
</dbReference>
<dbReference type="InterPro" id="IPR014721">
    <property type="entry name" value="Ribsml_uS5_D2-typ_fold_subgr"/>
</dbReference>
<dbReference type="NCBIfam" id="TIGR00191">
    <property type="entry name" value="thrB"/>
    <property type="match status" value="1"/>
</dbReference>
<dbReference type="PANTHER" id="PTHR20861:SF1">
    <property type="entry name" value="HOMOSERINE KINASE"/>
    <property type="match status" value="1"/>
</dbReference>
<dbReference type="PANTHER" id="PTHR20861">
    <property type="entry name" value="HOMOSERINE/4-DIPHOSPHOCYTIDYL-2-C-METHYL-D-ERYTHRITOL KINASE"/>
    <property type="match status" value="1"/>
</dbReference>
<dbReference type="Pfam" id="PF08544">
    <property type="entry name" value="GHMP_kinases_C"/>
    <property type="match status" value="1"/>
</dbReference>
<dbReference type="Pfam" id="PF00288">
    <property type="entry name" value="GHMP_kinases_N"/>
    <property type="match status" value="1"/>
</dbReference>
<dbReference type="PIRSF" id="PIRSF000676">
    <property type="entry name" value="Homoser_kin"/>
    <property type="match status" value="1"/>
</dbReference>
<dbReference type="PRINTS" id="PR00958">
    <property type="entry name" value="HOMSERKINASE"/>
</dbReference>
<dbReference type="SUPFAM" id="SSF55060">
    <property type="entry name" value="GHMP Kinase, C-terminal domain"/>
    <property type="match status" value="1"/>
</dbReference>
<dbReference type="SUPFAM" id="SSF54211">
    <property type="entry name" value="Ribosomal protein S5 domain 2-like"/>
    <property type="match status" value="1"/>
</dbReference>
<dbReference type="PROSITE" id="PS00627">
    <property type="entry name" value="GHMP_KINASES_ATP"/>
    <property type="match status" value="1"/>
</dbReference>
<accession>C1A1Z3</accession>
<organism>
    <name type="scientific">Rhodococcus erythropolis (strain PR4 / NBRC 100887)</name>
    <dbReference type="NCBI Taxonomy" id="234621"/>
    <lineage>
        <taxon>Bacteria</taxon>
        <taxon>Bacillati</taxon>
        <taxon>Actinomycetota</taxon>
        <taxon>Actinomycetes</taxon>
        <taxon>Mycobacteriales</taxon>
        <taxon>Nocardiaceae</taxon>
        <taxon>Rhodococcus</taxon>
        <taxon>Rhodococcus erythropolis group</taxon>
    </lineage>
</organism>
<keyword id="KW-0028">Amino-acid biosynthesis</keyword>
<keyword id="KW-0067">ATP-binding</keyword>
<keyword id="KW-0963">Cytoplasm</keyword>
<keyword id="KW-0418">Kinase</keyword>
<keyword id="KW-0547">Nucleotide-binding</keyword>
<keyword id="KW-0791">Threonine biosynthesis</keyword>
<keyword id="KW-0808">Transferase</keyword>
<reference key="1">
    <citation type="submission" date="2005-03" db="EMBL/GenBank/DDBJ databases">
        <title>Comparison of the complete genome sequences of Rhodococcus erythropolis PR4 and Rhodococcus opacus B4.</title>
        <authorList>
            <person name="Takarada H."/>
            <person name="Sekine M."/>
            <person name="Hosoyama A."/>
            <person name="Yamada R."/>
            <person name="Fujisawa T."/>
            <person name="Omata S."/>
            <person name="Shimizu A."/>
            <person name="Tsukatani N."/>
            <person name="Tanikawa S."/>
            <person name="Fujita N."/>
            <person name="Harayama S."/>
        </authorList>
    </citation>
    <scope>NUCLEOTIDE SEQUENCE [LARGE SCALE GENOMIC DNA]</scope>
    <source>
        <strain>PR4 / NBRC 100887</strain>
    </source>
</reference>
<sequence length="314" mass="32176">MTITLPIGLSVTARVPASSANLGPGFDTLGLALGLYDEIVVTTTDSGLQIRVEGEGAADVPWGPSHLVVRAIERGLEAAGVWASGLDVLCRNAIPHSRGLGSSASAAVGGLAAANGLARALDAEIGLTEEQLVQLSSEFEGHPDNASASVLGGAVVSWSCPPAVEGDEPIYSAAKLDVHPDIRAVALVPEERSSTAHTRGLLPELVPHQDASFNASRSALAVVALTARPDLLMAATEDRLHQAQRAPALPLTTRWIGILREAGIAATVSGAGPTVLALSTEPFPVELAEAARADGLRVLELDIADGVEVSTTTV</sequence>
<gene>
    <name evidence="1" type="primary">thrB</name>
    <name type="ordered locus">RER_39200</name>
</gene>